<sequence>MNKFDVVVVGGGHAGCEAAAAAARIGVKVALITLKPENLGEMPCNPAIGGRGKGHIVKEVDALDGLIGYIADQAGIHYKMLNHTKGPAVWGPRAQIDRALYKSAMYSTIMNYPNLTTIFASVEDIKVIANKVTAVIVNGKEIYCQKVILTTGTFLSGVIHRGKEQIKAGRLGENASYGLSNTLSELGLRLGRLKTGTPPRIDSRTIDYSKLEEQPGDLIPTPFSEITKKVLVPQIKCYITRTNEITHKIIKENLHLSAMYSGQIQGTGPRYCPSIEDKIIRFSHNASHQIFLEPEGLNSNTIYPNGISTSLPSDVQENMIRTIEGLENCKIIAYGYAIEYDYVDPRQLKHSLEVKSVGGLYLAGQINGTTGYEEAAGQGIMAGINAALAVKKQDPFILDRTDAYIGVMIDDLTNGIDEPYRMFTSRSEYRLSIRADNADQRLTPKAIDLGCVSQLRQEVFQKKLSKLNTLRDYVQSLTITPKQLQNCGYQISQNGIARTAFSLLGLPNFGINIVKDIYPELNRYDNNLLLLLTYESKYHVYLERQKEDIELFKQEETYQIPQDLNYDQIPSLSIEVREKLKQYQPETIRAAKHINGVTPSAIMAIIIFLKTKYLNSSITDKK</sequence>
<organism>
    <name type="scientific">Orientia tsutsugamushi (strain Boryong)</name>
    <name type="common">Rickettsia tsutsugamushi</name>
    <dbReference type="NCBI Taxonomy" id="357244"/>
    <lineage>
        <taxon>Bacteria</taxon>
        <taxon>Pseudomonadati</taxon>
        <taxon>Pseudomonadota</taxon>
        <taxon>Alphaproteobacteria</taxon>
        <taxon>Rickettsiales</taxon>
        <taxon>Rickettsiaceae</taxon>
        <taxon>Rickettsieae</taxon>
        <taxon>Orientia</taxon>
    </lineage>
</organism>
<proteinExistence type="inferred from homology"/>
<accession>A5CDS8</accession>
<protein>
    <recommendedName>
        <fullName evidence="1">tRNA uridine 5-carboxymethylaminomethyl modification enzyme MnmG</fullName>
    </recommendedName>
    <alternativeName>
        <fullName evidence="1">Glucose-inhibited division protein A</fullName>
    </alternativeName>
</protein>
<comment type="function">
    <text evidence="1">NAD-binding protein involved in the addition of a carboxymethylaminomethyl (cmnm) group at the wobble position (U34) of certain tRNAs, forming tRNA-cmnm(5)s(2)U34.</text>
</comment>
<comment type="cofactor">
    <cofactor evidence="1">
        <name>FAD</name>
        <dbReference type="ChEBI" id="CHEBI:57692"/>
    </cofactor>
</comment>
<comment type="subunit">
    <text evidence="1">Homodimer. Heterotetramer of two MnmE and two MnmG subunits.</text>
</comment>
<comment type="subcellular location">
    <subcellularLocation>
        <location evidence="1">Cytoplasm</location>
    </subcellularLocation>
</comment>
<comment type="similarity">
    <text evidence="1">Belongs to the MnmG family.</text>
</comment>
<evidence type="ECO:0000255" key="1">
    <source>
        <dbReference type="HAMAP-Rule" id="MF_00129"/>
    </source>
</evidence>
<reference key="1">
    <citation type="journal article" date="2007" name="Proc. Natl. Acad. Sci. U.S.A.">
        <title>The Orientia tsutsugamushi genome reveals massive proliferation of conjugative type IV secretion system and host-cell interaction genes.</title>
        <authorList>
            <person name="Cho N.-H."/>
            <person name="Kim H.-R."/>
            <person name="Lee J.-H."/>
            <person name="Kim S.-Y."/>
            <person name="Kim J."/>
            <person name="Cha S."/>
            <person name="Kim S.-Y."/>
            <person name="Darby A.C."/>
            <person name="Fuxelius H.-H."/>
            <person name="Yin J."/>
            <person name="Kim J.H."/>
            <person name="Kim J."/>
            <person name="Lee S.J."/>
            <person name="Koh Y.-S."/>
            <person name="Jang W.-J."/>
            <person name="Park K.-H."/>
            <person name="Andersson S.G.E."/>
            <person name="Choi M.-S."/>
            <person name="Kim I.-S."/>
        </authorList>
    </citation>
    <scope>NUCLEOTIDE SEQUENCE [LARGE SCALE GENOMIC DNA]</scope>
    <source>
        <strain>Boryong</strain>
    </source>
</reference>
<feature type="chain" id="PRO_1000016632" description="tRNA uridine 5-carboxymethylaminomethyl modification enzyme MnmG">
    <location>
        <begin position="1"/>
        <end position="622"/>
    </location>
</feature>
<feature type="binding site" evidence="1">
    <location>
        <begin position="10"/>
        <end position="15"/>
    </location>
    <ligand>
        <name>FAD</name>
        <dbReference type="ChEBI" id="CHEBI:57692"/>
    </ligand>
</feature>
<feature type="binding site" evidence="1">
    <location>
        <position position="122"/>
    </location>
    <ligand>
        <name>FAD</name>
        <dbReference type="ChEBI" id="CHEBI:57692"/>
    </ligand>
</feature>
<feature type="binding site" evidence="1">
    <location>
        <position position="176"/>
    </location>
    <ligand>
        <name>FAD</name>
        <dbReference type="ChEBI" id="CHEBI:57692"/>
    </ligand>
</feature>
<feature type="binding site" evidence="1">
    <location>
        <begin position="268"/>
        <end position="282"/>
    </location>
    <ligand>
        <name>NAD(+)</name>
        <dbReference type="ChEBI" id="CHEBI:57540"/>
    </ligand>
</feature>
<feature type="binding site" evidence="1">
    <location>
        <position position="365"/>
    </location>
    <ligand>
        <name>FAD</name>
        <dbReference type="ChEBI" id="CHEBI:57692"/>
    </ligand>
</feature>
<keyword id="KW-0963">Cytoplasm</keyword>
<keyword id="KW-0274">FAD</keyword>
<keyword id="KW-0285">Flavoprotein</keyword>
<keyword id="KW-0520">NAD</keyword>
<keyword id="KW-1185">Reference proteome</keyword>
<keyword id="KW-0819">tRNA processing</keyword>
<dbReference type="EMBL" id="AM494475">
    <property type="protein sequence ID" value="CAM80083.1"/>
    <property type="molecule type" value="Genomic_DNA"/>
</dbReference>
<dbReference type="RefSeq" id="WP_011944740.1">
    <property type="nucleotide sequence ID" value="NC_009488.1"/>
</dbReference>
<dbReference type="SMR" id="A5CDS8"/>
<dbReference type="KEGG" id="ots:OTBS_1017"/>
<dbReference type="eggNOG" id="COG0445">
    <property type="taxonomic scope" value="Bacteria"/>
</dbReference>
<dbReference type="HOGENOM" id="CLU_007831_2_2_5"/>
<dbReference type="Proteomes" id="UP000001565">
    <property type="component" value="Chromosome"/>
</dbReference>
<dbReference type="GO" id="GO:0005829">
    <property type="term" value="C:cytosol"/>
    <property type="evidence" value="ECO:0007669"/>
    <property type="project" value="TreeGrafter"/>
</dbReference>
<dbReference type="GO" id="GO:0050660">
    <property type="term" value="F:flavin adenine dinucleotide binding"/>
    <property type="evidence" value="ECO:0007669"/>
    <property type="project" value="UniProtKB-UniRule"/>
</dbReference>
<dbReference type="GO" id="GO:0030488">
    <property type="term" value="P:tRNA methylation"/>
    <property type="evidence" value="ECO:0007669"/>
    <property type="project" value="TreeGrafter"/>
</dbReference>
<dbReference type="GO" id="GO:0002098">
    <property type="term" value="P:tRNA wobble uridine modification"/>
    <property type="evidence" value="ECO:0007669"/>
    <property type="project" value="InterPro"/>
</dbReference>
<dbReference type="FunFam" id="3.50.50.60:FF:000082">
    <property type="entry name" value="protein MTO1 homolog, mitochondrial isoform X1"/>
    <property type="match status" value="1"/>
</dbReference>
<dbReference type="FunFam" id="1.10.150.570:FF:000001">
    <property type="entry name" value="tRNA uridine 5-carboxymethylaminomethyl modification enzyme MnmG"/>
    <property type="match status" value="1"/>
</dbReference>
<dbReference type="FunFam" id="3.50.50.60:FF:000002">
    <property type="entry name" value="tRNA uridine 5-carboxymethylaminomethyl modification enzyme MnmG"/>
    <property type="match status" value="1"/>
</dbReference>
<dbReference type="Gene3D" id="3.50.50.60">
    <property type="entry name" value="FAD/NAD(P)-binding domain"/>
    <property type="match status" value="2"/>
</dbReference>
<dbReference type="Gene3D" id="1.10.150.570">
    <property type="entry name" value="GidA associated domain, C-terminal subdomain"/>
    <property type="match status" value="1"/>
</dbReference>
<dbReference type="HAMAP" id="MF_00129">
    <property type="entry name" value="MnmG_GidA"/>
    <property type="match status" value="1"/>
</dbReference>
<dbReference type="InterPro" id="IPR036188">
    <property type="entry name" value="FAD/NAD-bd_sf"/>
</dbReference>
<dbReference type="InterPro" id="IPR049312">
    <property type="entry name" value="GIDA_C_N"/>
</dbReference>
<dbReference type="InterPro" id="IPR004416">
    <property type="entry name" value="MnmG"/>
</dbReference>
<dbReference type="InterPro" id="IPR002218">
    <property type="entry name" value="MnmG-rel"/>
</dbReference>
<dbReference type="InterPro" id="IPR020595">
    <property type="entry name" value="MnmG-rel_CS"/>
</dbReference>
<dbReference type="InterPro" id="IPR026904">
    <property type="entry name" value="MnmG_C"/>
</dbReference>
<dbReference type="InterPro" id="IPR047001">
    <property type="entry name" value="MnmG_C_subdom"/>
</dbReference>
<dbReference type="InterPro" id="IPR044920">
    <property type="entry name" value="MnmG_C_subdom_sf"/>
</dbReference>
<dbReference type="InterPro" id="IPR040131">
    <property type="entry name" value="MnmG_N"/>
</dbReference>
<dbReference type="NCBIfam" id="TIGR00136">
    <property type="entry name" value="mnmG_gidA"/>
    <property type="match status" value="1"/>
</dbReference>
<dbReference type="PANTHER" id="PTHR11806">
    <property type="entry name" value="GLUCOSE INHIBITED DIVISION PROTEIN A"/>
    <property type="match status" value="1"/>
</dbReference>
<dbReference type="PANTHER" id="PTHR11806:SF0">
    <property type="entry name" value="PROTEIN MTO1 HOMOLOG, MITOCHONDRIAL"/>
    <property type="match status" value="1"/>
</dbReference>
<dbReference type="Pfam" id="PF01134">
    <property type="entry name" value="GIDA"/>
    <property type="match status" value="1"/>
</dbReference>
<dbReference type="Pfam" id="PF21680">
    <property type="entry name" value="GIDA_C_1st"/>
    <property type="match status" value="1"/>
</dbReference>
<dbReference type="Pfam" id="PF13932">
    <property type="entry name" value="SAM_GIDA_C"/>
    <property type="match status" value="1"/>
</dbReference>
<dbReference type="PRINTS" id="PR00411">
    <property type="entry name" value="PNDRDTASEI"/>
</dbReference>
<dbReference type="SMART" id="SM01228">
    <property type="entry name" value="GIDA_assoc_3"/>
    <property type="match status" value="1"/>
</dbReference>
<dbReference type="SUPFAM" id="SSF51905">
    <property type="entry name" value="FAD/NAD(P)-binding domain"/>
    <property type="match status" value="1"/>
</dbReference>
<dbReference type="PROSITE" id="PS01280">
    <property type="entry name" value="GIDA_1"/>
    <property type="match status" value="1"/>
</dbReference>
<dbReference type="PROSITE" id="PS01281">
    <property type="entry name" value="GIDA_2"/>
    <property type="match status" value="1"/>
</dbReference>
<gene>
    <name evidence="1" type="primary">mnmG</name>
    <name evidence="1" type="synonym">gidA</name>
    <name type="ordered locus">OTBS_1017</name>
</gene>
<name>MNMG_ORITB</name>